<organism>
    <name type="scientific">Gallus gallus</name>
    <name type="common">Chicken</name>
    <dbReference type="NCBI Taxonomy" id="9031"/>
    <lineage>
        <taxon>Eukaryota</taxon>
        <taxon>Metazoa</taxon>
        <taxon>Chordata</taxon>
        <taxon>Craniata</taxon>
        <taxon>Vertebrata</taxon>
        <taxon>Euteleostomi</taxon>
        <taxon>Archelosauria</taxon>
        <taxon>Archosauria</taxon>
        <taxon>Dinosauria</taxon>
        <taxon>Saurischia</taxon>
        <taxon>Theropoda</taxon>
        <taxon>Coelurosauria</taxon>
        <taxon>Aves</taxon>
        <taxon>Neognathae</taxon>
        <taxon>Galloanserae</taxon>
        <taxon>Galliformes</taxon>
        <taxon>Phasianidae</taxon>
        <taxon>Phasianinae</taxon>
        <taxon>Gallus</taxon>
    </lineage>
</organism>
<evidence type="ECO:0000250" key="1">
    <source>
        <dbReference type="UniProtKB" id="A0A5G2QD80"/>
    </source>
</evidence>
<evidence type="ECO:0000250" key="2">
    <source>
        <dbReference type="UniProtKB" id="Q13561"/>
    </source>
</evidence>
<evidence type="ECO:0000250" key="3">
    <source>
        <dbReference type="UniProtKB" id="Q99KJ8"/>
    </source>
</evidence>
<evidence type="ECO:0000255" key="4"/>
<evidence type="ECO:0000256" key="5">
    <source>
        <dbReference type="SAM" id="MobiDB-lite"/>
    </source>
</evidence>
<evidence type="ECO:0000305" key="6"/>
<protein>
    <recommendedName>
        <fullName>Dynactin subunit 2</fullName>
    </recommendedName>
    <alternativeName>
        <fullName>p50 dynamitin</fullName>
    </alternativeName>
</protein>
<sequence length="402" mass="45126">MADPKYADLPGIARNEPDVYETSDLPEDDQAEFEAELEELTSTSVEHLIINPNAAFEKFKDKRLGTDGVDFSDRISKSRTTGYESGEYEILGEGLGAKETPQQRYQRLQHEVQELIRDVEQIQSAVKESAAEEELTPMALARQLEGLKQQLVSCHLQKLLGPTAAIDFADPEGALAKRLQQQLEVPSVKKAAPAKSPPKAPGPTTDALTFELFWRRPEQDQFSQTAKIAELEKRLAQLEAMVRCEPDSQNPLLVGAEGTSLVETVQILQAKVNILDAAVLDQVEARLQRRPGSKVNEIAKHKAIVQDADTQSKIHQVVYEMMQRWDHMASSLPDVVQRLLTLRDLHEQASRFVQVLVHLDTTQQEVDVVQRLLAEVQKTMKENLAVVEDNFAEVEARIKRLQ</sequence>
<feature type="chain" id="PRO_0000288767" description="Dynactin subunit 2">
    <location>
        <begin position="1"/>
        <end position="402"/>
    </location>
</feature>
<feature type="region of interest" description="Disordered" evidence="5">
    <location>
        <begin position="1"/>
        <end position="26"/>
    </location>
</feature>
<feature type="coiled-coil region" evidence="4">
    <location>
        <begin position="101"/>
        <end position="132"/>
    </location>
</feature>
<feature type="coiled-coil region" evidence="4">
    <location>
        <begin position="357"/>
        <end position="402"/>
    </location>
</feature>
<accession>Q9PTG6</accession>
<name>DCTN2_CHICK</name>
<dbReference type="EMBL" id="AF200744">
    <property type="protein sequence ID" value="AAF13996.1"/>
    <property type="molecule type" value="mRNA"/>
</dbReference>
<dbReference type="SMR" id="Q9PTG6"/>
<dbReference type="BioGRID" id="675866">
    <property type="interactions" value="1"/>
</dbReference>
<dbReference type="FunCoup" id="Q9PTG6">
    <property type="interactions" value="2682"/>
</dbReference>
<dbReference type="IntAct" id="Q9PTG6">
    <property type="interactions" value="1"/>
</dbReference>
<dbReference type="STRING" id="9031.ENSGALP00000050548"/>
<dbReference type="GlyGen" id="Q9PTG6">
    <property type="glycosylation" value="2 sites"/>
</dbReference>
<dbReference type="PaxDb" id="9031-ENSGALP00000043356"/>
<dbReference type="VEuPathDB" id="HostDB:geneid_395587"/>
<dbReference type="InParanoid" id="Q9PTG6"/>
<dbReference type="OrthoDB" id="4977at2759"/>
<dbReference type="PhylomeDB" id="Q9PTG6"/>
<dbReference type="PRO" id="PR:Q9PTG6"/>
<dbReference type="Proteomes" id="UP000000539">
    <property type="component" value="Unassembled WGS sequence"/>
</dbReference>
<dbReference type="GO" id="GO:0005813">
    <property type="term" value="C:centrosome"/>
    <property type="evidence" value="ECO:0000318"/>
    <property type="project" value="GO_Central"/>
</dbReference>
<dbReference type="GO" id="GO:0005737">
    <property type="term" value="C:cytoplasm"/>
    <property type="evidence" value="ECO:0000318"/>
    <property type="project" value="GO_Central"/>
</dbReference>
<dbReference type="GO" id="GO:0005869">
    <property type="term" value="C:dynactin complex"/>
    <property type="evidence" value="ECO:0000318"/>
    <property type="project" value="GO_Central"/>
</dbReference>
<dbReference type="GO" id="GO:0030286">
    <property type="term" value="C:dynein complex"/>
    <property type="evidence" value="ECO:0007669"/>
    <property type="project" value="UniProtKB-KW"/>
</dbReference>
<dbReference type="GO" id="GO:0016020">
    <property type="term" value="C:membrane"/>
    <property type="evidence" value="ECO:0007669"/>
    <property type="project" value="UniProtKB-SubCell"/>
</dbReference>
<dbReference type="GO" id="GO:0005874">
    <property type="term" value="C:microtubule"/>
    <property type="evidence" value="ECO:0007669"/>
    <property type="project" value="UniProtKB-KW"/>
</dbReference>
<dbReference type="GO" id="GO:0031982">
    <property type="term" value="C:vesicle"/>
    <property type="evidence" value="ECO:0000250"/>
    <property type="project" value="UniProtKB"/>
</dbReference>
<dbReference type="GO" id="GO:0007052">
    <property type="term" value="P:mitotic spindle organization"/>
    <property type="evidence" value="ECO:0000318"/>
    <property type="project" value="GO_Central"/>
</dbReference>
<dbReference type="InterPro" id="IPR028133">
    <property type="entry name" value="Dynamitin"/>
</dbReference>
<dbReference type="PANTHER" id="PTHR15346">
    <property type="entry name" value="DYNACTIN SUBUNIT"/>
    <property type="match status" value="1"/>
</dbReference>
<dbReference type="Pfam" id="PF04912">
    <property type="entry name" value="Dynamitin"/>
    <property type="match status" value="1"/>
</dbReference>
<gene>
    <name type="primary">DCTN2</name>
</gene>
<proteinExistence type="evidence at transcript level"/>
<reference key="1">
    <citation type="submission" date="1999-11" db="EMBL/GenBank/DDBJ databases">
        <title>Chicken p50-dynamitin, a subunit of dynactin complex.</title>
        <authorList>
            <person name="Schroer T.A."/>
            <person name="Gill S.R."/>
            <person name="Hasbani J."/>
            <person name="Crego C."/>
        </authorList>
    </citation>
    <scope>NUCLEOTIDE SEQUENCE [MRNA]</scope>
</reference>
<keyword id="KW-0175">Coiled coil</keyword>
<keyword id="KW-0963">Cytoplasm</keyword>
<keyword id="KW-0206">Cytoskeleton</keyword>
<keyword id="KW-0243">Dynein</keyword>
<keyword id="KW-0472">Membrane</keyword>
<keyword id="KW-0493">Microtubule</keyword>
<keyword id="KW-1185">Reference proteome</keyword>
<comment type="function">
    <text evidence="1 3">Part of the dynactin complex that activates the molecular motor dynein for ultra-processive transport along microtubules. In the dynactin soulder domain, binds the ACTR1A filament and acts as a molecular ruler to determine the length (By similarity). Modulates cytoplasmic dynein binding to an organelle, and plays a role in prometaphase chromosome alignment and spindle organization during mitosis. Involved in anchoring microtubules to centrosomes (By similarity).</text>
</comment>
<comment type="subunit">
    <text evidence="1">Subunit of dynactin, a multiprotein complex part of a tripartite complex with dynein and a adapter, such as BICDL1, BICD2 or HOOK3. The dynactin complex is built around ACTR1A/ACTB filament and consists of an actin-related filament composed of a shoulder domain, a pointed end and a barbed end. Its length is defined by its flexible shoulder domain. The soulder is composed of 2 DCTN1 subunits, 4 DCTN2 and 2 DCTN3.</text>
</comment>
<comment type="subcellular location">
    <subcellularLocation>
        <location evidence="2">Cytoplasm</location>
        <location evidence="2">Cytoskeleton</location>
        <location evidence="2">Microtubule organizing center</location>
        <location evidence="2">Centrosome</location>
    </subcellularLocation>
    <subcellularLocation>
        <location evidence="2">Membrane</location>
        <topology evidence="2">Peripheral membrane protein</topology>
    </subcellularLocation>
    <subcellularLocation>
        <location evidence="1">Cytoplasm</location>
        <location evidence="1">Cytoskeleton</location>
    </subcellularLocation>
</comment>
<comment type="similarity">
    <text evidence="6">Belongs to the dynactin subunit 2 family.</text>
</comment>